<evidence type="ECO:0000256" key="1">
    <source>
        <dbReference type="SAM" id="MobiDB-lite"/>
    </source>
</evidence>
<proteinExistence type="predicted"/>
<sequence>MTNEAINQQPQTEAAFNPQQFINNLQVAFIKVDNVVASFDPNQKPIVDKNDRDNRQAFEKISQLREEFANKAIKNPTKKNQYFSSFISKSNDLIDKDNLIDTGSSIKSFQKFGTQRYQIFMNWVSHQNDPSKINTQKIRGFMENIIQPPISDDKEKAEFLRSAKQAFAGIIIGNQIRSDQKFMGVFDESLKERQEAEKNGEPNGDPTGGDWLDIFLSFVFNKKQSSDLKETLNQEPVPHVQPDVATTTTDIQSLPPEARDLLDERGNFSKFTLGDMNMLDVEGVADIDPNYKFNQLLIHNNALSSVLMGSHNGIEPEKVSLLYGNNGGPEARHDWNATVGYKNQRGDNVATLINVHMKNGSGLVIAGGEKGINNPSFYLYKEDQLTGSQRALSQEEIQNKVDFMEFLAQNNAKLDNLSKKEKEKFQNEIEDFQKDSKAYLDALGNDHIAFVSKKDKKHLALVAEFGNGELSYTLKDYGKKADKALDREAKTTLQGSLKHDGVMFVDYSNFKYTNASKSPDKGVGATNGVSHLEAGFSKVAVFNLPNLNNLAITSVVRQDLEDKLIAKGLSPQEANKLVKDFLSSNKELVGKALNFNKAVAEAKNTGNYDEVKQAQKDLEKSLKKRERLEKDVAKNLESKSGNKNKMEAKSQANSQKDEIFALINKEANRDARAIAYAQNLKGIKRELSDKLENINKDLKDFSKSFDEFKNGKNKDFSKAEETLKALKGSVKDLGINPEWISKVENLNAALNEFKNGKNKDFSKVTQAKSDLENSIKDVIINQKITDKVDNLNQAVSVAKATGDFSGVEQALADLKNFSKEQLAQQAQKNEDFNTGKNSALYQSVKNGVNGTLVGNGLSKAEATTLSKNFSDIKKELNAKLGNFNNNNNNGLENSTEPIYTQVAKKVKAKIDRLDQIASGLGDVGQAASFLLKRHDKVDDLSKVGLSANHEPIYATIDDLGGPFPLKRHDKVDDLSKVGLSREQKLTQKIDNLNQAVSEAKASHFDNLDQMIDKLKDSTKKNVVNLYVESAKKVPTSLSAKLDNYATNSHTRINSNVKNGTINEKATGMLTQKNSEWLKLVNDKIVAHNVGSAPLSAYDKIGFNQKNMKDYSDSFKFSTRLSNAVKDIKSGFVQFLTNIFSMGSYSLMKASVEHGVKNTNTKGGFQKS</sequence>
<protein>
    <recommendedName>
        <fullName>Cytotoxicity-associated immunodominant antigen</fullName>
    </recommendedName>
    <alternativeName>
        <fullName>120 kDa protein</fullName>
    </alternativeName>
    <alternativeName>
        <fullName>CAG pathogenicity island protein 26</fullName>
    </alternativeName>
</protein>
<reference key="1">
    <citation type="journal article" date="1999" name="Nature">
        <title>Genomic sequence comparison of two unrelated isolates of the human gastric pathogen Helicobacter pylori.</title>
        <authorList>
            <person name="Alm R.A."/>
            <person name="Ling L.-S.L."/>
            <person name="Moir D.T."/>
            <person name="King B.L."/>
            <person name="Brown E.D."/>
            <person name="Doig P.C."/>
            <person name="Smith D.R."/>
            <person name="Noonan B."/>
            <person name="Guild B.C."/>
            <person name="deJonge B.L."/>
            <person name="Carmel G."/>
            <person name="Tummino P.J."/>
            <person name="Caruso A."/>
            <person name="Uria-Nickelsen M."/>
            <person name="Mills D.M."/>
            <person name="Ives C."/>
            <person name="Gibson R."/>
            <person name="Merberg D."/>
            <person name="Mills S.D."/>
            <person name="Jiang Q."/>
            <person name="Taylor D.E."/>
            <person name="Vovis G.F."/>
            <person name="Trust T.J."/>
        </authorList>
    </citation>
    <scope>NUCLEOTIDE SEQUENCE [LARGE SCALE GENOMIC DNA]</scope>
    <source>
        <strain>J99 / ATCC 700824</strain>
    </source>
</reference>
<gene>
    <name type="primary">cagA</name>
    <name type="synonym">cag26</name>
    <name type="synonym">cai</name>
    <name type="ordered locus">jhp_0495</name>
</gene>
<comment type="function">
    <text>May be necessary for the transcription, folding, export, or function of the cytotoxin.</text>
</comment>
<dbReference type="EMBL" id="AE001439">
    <property type="protein sequence ID" value="AAD06073.1"/>
    <property type="molecule type" value="Genomic_DNA"/>
</dbReference>
<dbReference type="PIR" id="B71924">
    <property type="entry name" value="B71924"/>
</dbReference>
<dbReference type="RefSeq" id="WP_000180410.1">
    <property type="nucleotide sequence ID" value="NC_000921.1"/>
</dbReference>
<dbReference type="SMR" id="Q9ZLT1"/>
<dbReference type="IntAct" id="Q9ZLT1">
    <property type="interactions" value="1"/>
</dbReference>
<dbReference type="KEGG" id="hpj:jhp_0495"/>
<dbReference type="eggNOG" id="COG1842">
    <property type="taxonomic scope" value="Bacteria"/>
</dbReference>
<dbReference type="Proteomes" id="UP000000804">
    <property type="component" value="Chromosome"/>
</dbReference>
<dbReference type="GO" id="GO:0019534">
    <property type="term" value="F:toxin transmembrane transporter activity"/>
    <property type="evidence" value="ECO:0007669"/>
    <property type="project" value="InterPro"/>
</dbReference>
<dbReference type="Gene3D" id="1.10.357.130">
    <property type="match status" value="1"/>
</dbReference>
<dbReference type="Gene3D" id="1.20.120.1270">
    <property type="entry name" value="CagA exotoxin domain III"/>
    <property type="match status" value="5"/>
</dbReference>
<dbReference type="InterPro" id="IPR005169">
    <property type="entry name" value="CagA_C"/>
</dbReference>
<dbReference type="InterPro" id="IPR045157">
    <property type="entry name" value="CagA_N"/>
</dbReference>
<dbReference type="InterPro" id="IPR004355">
    <property type="entry name" value="IVSec_CagA"/>
</dbReference>
<dbReference type="NCBIfam" id="NF033422">
    <property type="entry name" value="onco_T4SS_CagA"/>
    <property type="match status" value="1"/>
</dbReference>
<dbReference type="Pfam" id="PF03507">
    <property type="entry name" value="CagA"/>
    <property type="match status" value="2"/>
</dbReference>
<dbReference type="Pfam" id="PF18971">
    <property type="entry name" value="CagA_N"/>
    <property type="match status" value="1"/>
</dbReference>
<dbReference type="PRINTS" id="PR01553">
    <property type="entry name" value="TYPE4SSCAGA"/>
</dbReference>
<organism>
    <name type="scientific">Helicobacter pylori (strain J99 / ATCC 700824)</name>
    <name type="common">Campylobacter pylori J99</name>
    <dbReference type="NCBI Taxonomy" id="85963"/>
    <lineage>
        <taxon>Bacteria</taxon>
        <taxon>Pseudomonadati</taxon>
        <taxon>Campylobacterota</taxon>
        <taxon>Epsilonproteobacteria</taxon>
        <taxon>Campylobacterales</taxon>
        <taxon>Helicobacteraceae</taxon>
        <taxon>Helicobacter</taxon>
    </lineage>
</organism>
<accession>Q9ZLT1</accession>
<feature type="chain" id="PRO_0000089278" description="Cytotoxicity-associated immunodominant antigen">
    <location>
        <begin position="1"/>
        <end position="1167"/>
    </location>
</feature>
<feature type="region of interest" description="Disordered" evidence="1">
    <location>
        <begin position="632"/>
        <end position="651"/>
    </location>
</feature>
<name>CAGA_HELPJ</name>